<dbReference type="EMBL" id="CP000911">
    <property type="protein sequence ID" value="ABY38378.1"/>
    <property type="molecule type" value="Genomic_DNA"/>
</dbReference>
<dbReference type="RefSeq" id="WP_002964399.1">
    <property type="nucleotide sequence ID" value="NC_010169.1"/>
</dbReference>
<dbReference type="SMR" id="B0CH77"/>
<dbReference type="GeneID" id="97533485"/>
<dbReference type="KEGG" id="bmt:BSUIS_A1331"/>
<dbReference type="HOGENOM" id="CLU_052299_2_0_5"/>
<dbReference type="Proteomes" id="UP000008545">
    <property type="component" value="Chromosome I"/>
</dbReference>
<dbReference type="GO" id="GO:0003677">
    <property type="term" value="F:DNA binding"/>
    <property type="evidence" value="ECO:0007669"/>
    <property type="project" value="InterPro"/>
</dbReference>
<dbReference type="CDD" id="cd22359">
    <property type="entry name" value="SfsA-like_bacterial"/>
    <property type="match status" value="1"/>
</dbReference>
<dbReference type="Gene3D" id="2.40.50.580">
    <property type="match status" value="1"/>
</dbReference>
<dbReference type="Gene3D" id="3.40.1350.60">
    <property type="match status" value="1"/>
</dbReference>
<dbReference type="HAMAP" id="MF_00095">
    <property type="entry name" value="SfsA"/>
    <property type="match status" value="1"/>
</dbReference>
<dbReference type="InterPro" id="IPR005224">
    <property type="entry name" value="SfsA"/>
</dbReference>
<dbReference type="InterPro" id="IPR040452">
    <property type="entry name" value="SfsA_C"/>
</dbReference>
<dbReference type="InterPro" id="IPR041465">
    <property type="entry name" value="SfsA_N"/>
</dbReference>
<dbReference type="NCBIfam" id="TIGR00230">
    <property type="entry name" value="sfsA"/>
    <property type="match status" value="1"/>
</dbReference>
<dbReference type="PANTHER" id="PTHR30545">
    <property type="entry name" value="SUGAR FERMENTATION STIMULATION PROTEIN A"/>
    <property type="match status" value="1"/>
</dbReference>
<dbReference type="PANTHER" id="PTHR30545:SF2">
    <property type="entry name" value="SUGAR FERMENTATION STIMULATION PROTEIN A"/>
    <property type="match status" value="1"/>
</dbReference>
<dbReference type="Pfam" id="PF03749">
    <property type="entry name" value="SfsA"/>
    <property type="match status" value="1"/>
</dbReference>
<dbReference type="Pfam" id="PF17746">
    <property type="entry name" value="SfsA_N"/>
    <property type="match status" value="1"/>
</dbReference>
<reference key="1">
    <citation type="submission" date="2007-12" db="EMBL/GenBank/DDBJ databases">
        <title>Brucella suis ATCC 23445 whole genome shotgun sequencing project.</title>
        <authorList>
            <person name="Setubal J.C."/>
            <person name="Bowns C."/>
            <person name="Boyle S."/>
            <person name="Crasta O.R."/>
            <person name="Czar M.J."/>
            <person name="Dharmanolla C."/>
            <person name="Gillespie J.J."/>
            <person name="Kenyon R.W."/>
            <person name="Lu J."/>
            <person name="Mane S."/>
            <person name="Mohapatra S."/>
            <person name="Nagrani S."/>
            <person name="Purkayastha A."/>
            <person name="Rajasimha H.K."/>
            <person name="Shallom J.M."/>
            <person name="Shallom S."/>
            <person name="Shukla M."/>
            <person name="Snyder E.E."/>
            <person name="Sobral B.W."/>
            <person name="Wattam A.R."/>
            <person name="Will R."/>
            <person name="Williams K."/>
            <person name="Yoo H."/>
            <person name="Bruce D."/>
            <person name="Detter C."/>
            <person name="Munk C."/>
            <person name="Brettin T.S."/>
        </authorList>
    </citation>
    <scope>NUCLEOTIDE SEQUENCE [LARGE SCALE GENOMIC DNA]</scope>
    <source>
        <strain>ATCC 23445 / NCTC 10510</strain>
    </source>
</reference>
<accession>B0CH77</accession>
<protein>
    <recommendedName>
        <fullName evidence="1">Sugar fermentation stimulation protein homolog</fullName>
    </recommendedName>
</protein>
<name>SFSA_BRUSI</name>
<organism>
    <name type="scientific">Brucella suis (strain ATCC 23445 / NCTC 10510)</name>
    <dbReference type="NCBI Taxonomy" id="470137"/>
    <lineage>
        <taxon>Bacteria</taxon>
        <taxon>Pseudomonadati</taxon>
        <taxon>Pseudomonadota</taxon>
        <taxon>Alphaproteobacteria</taxon>
        <taxon>Hyphomicrobiales</taxon>
        <taxon>Brucellaceae</taxon>
        <taxon>Brucella/Ochrobactrum group</taxon>
        <taxon>Brucella</taxon>
    </lineage>
</organism>
<sequence length="238" mass="26440">MLFPTPLISGRLERRYKRFLADVTLDDGRFITASVPNTGSMLGLTAPGSRVWLSFSDAPHRKYAHTLQIVEADNTLVGVNTGLPNRIAEEAILKGLIPDLDGYATLKREQKYGRNSRIDLLLDDGPRPRAYVEVKNVHFIRTPGLAEFPDTVTARGAKHLDELVDVVAAGHRGIMLFIIQRADCSRFGISGDLDPFYARAFERAIASGVEAWAVRCHITENGIDATELVPIEDMRRIE</sequence>
<feature type="chain" id="PRO_1000075535" description="Sugar fermentation stimulation protein homolog">
    <location>
        <begin position="1"/>
        <end position="238"/>
    </location>
</feature>
<gene>
    <name evidence="1" type="primary">sfsA</name>
    <name type="ordered locus">BSUIS_A1331</name>
</gene>
<evidence type="ECO:0000255" key="1">
    <source>
        <dbReference type="HAMAP-Rule" id="MF_00095"/>
    </source>
</evidence>
<comment type="similarity">
    <text evidence="1">Belongs to the SfsA family.</text>
</comment>
<proteinExistence type="inferred from homology"/>